<evidence type="ECO:0000255" key="1">
    <source>
        <dbReference type="PROSITE-ProRule" id="PRU00080"/>
    </source>
</evidence>
<accession>Q3E8L5</accession>
<sequence>MDHLSNLPDELLCHIMSFLTTKEAALISVLSKRWRNLIAFVPNLDIFDCDILHWEVRKEERDDIRQLFMDFVDRVLALQGNSPLKKFSLCCGGGSYSDRVDCWIQNVMVRGVSELDLSMIFDTSYHMYPQVFENKKLNFEIFLRALPALEELVMNHIYWKELDVNVHVSVSSASLKTLTIKCIVCLHTKSFDTPSLAYLSYSDYAMGDYPVAKMENLFEARISLFVPEDDISRLMNSIRNVRYLYFSRDTLEVLSLCCESMPVFKNLKSLSIKSVESRGWQAMPVLLRNCPHLETLVLEALLHHVTDKCGDACACVSREEKGRSLKSCPVKVLEIKEFQGTMKEMHMIKHFLDYLPCLKEMKISYMKKNDHTTQFRVIPQVIAEMVEHYNKLSNCNVQLVVSG</sequence>
<name>FBL85_ARATH</name>
<organism>
    <name type="scientific">Arabidopsis thaliana</name>
    <name type="common">Mouse-ear cress</name>
    <dbReference type="NCBI Taxonomy" id="3702"/>
    <lineage>
        <taxon>Eukaryota</taxon>
        <taxon>Viridiplantae</taxon>
        <taxon>Streptophyta</taxon>
        <taxon>Embryophyta</taxon>
        <taxon>Tracheophyta</taxon>
        <taxon>Spermatophyta</taxon>
        <taxon>Magnoliopsida</taxon>
        <taxon>eudicotyledons</taxon>
        <taxon>Gunneridae</taxon>
        <taxon>Pentapetalae</taxon>
        <taxon>rosids</taxon>
        <taxon>malvids</taxon>
        <taxon>Brassicales</taxon>
        <taxon>Brassicaceae</taxon>
        <taxon>Camelineae</taxon>
        <taxon>Arabidopsis</taxon>
    </lineage>
</organism>
<gene>
    <name type="ordered locus">At5g38386</name>
    <name type="ORF">MXI10</name>
</gene>
<proteinExistence type="predicted"/>
<keyword id="KW-0433">Leucine-rich repeat</keyword>
<keyword id="KW-1185">Reference proteome</keyword>
<keyword id="KW-0677">Repeat</keyword>
<dbReference type="EMBL" id="AB005248">
    <property type="status" value="NOT_ANNOTATED_CDS"/>
    <property type="molecule type" value="Genomic_DNA"/>
</dbReference>
<dbReference type="EMBL" id="CP002688">
    <property type="protein sequence ID" value="AED94307.1"/>
    <property type="molecule type" value="Genomic_DNA"/>
</dbReference>
<dbReference type="EMBL" id="CP002688">
    <property type="protein sequence ID" value="ANM69322.1"/>
    <property type="molecule type" value="Genomic_DNA"/>
</dbReference>
<dbReference type="RefSeq" id="NP_001331014.1">
    <property type="nucleotide sequence ID" value="NM_001344245.1"/>
</dbReference>
<dbReference type="RefSeq" id="NP_680363.1">
    <property type="nucleotide sequence ID" value="NM_148058.2"/>
</dbReference>
<dbReference type="FunCoup" id="Q3E8L5">
    <property type="interactions" value="136"/>
</dbReference>
<dbReference type="PaxDb" id="3702-AT5G38386.1"/>
<dbReference type="EnsemblPlants" id="AT5G38386.1">
    <property type="protein sequence ID" value="AT5G38386.1"/>
    <property type="gene ID" value="AT5G38386"/>
</dbReference>
<dbReference type="EnsemblPlants" id="AT5G38386.2">
    <property type="protein sequence ID" value="AT5G38386.2"/>
    <property type="gene ID" value="AT5G38386"/>
</dbReference>
<dbReference type="GeneID" id="833823"/>
<dbReference type="Gramene" id="AT5G38386.1">
    <property type="protein sequence ID" value="AT5G38386.1"/>
    <property type="gene ID" value="AT5G38386"/>
</dbReference>
<dbReference type="Gramene" id="AT5G38386.2">
    <property type="protein sequence ID" value="AT5G38386.2"/>
    <property type="gene ID" value="AT5G38386"/>
</dbReference>
<dbReference type="KEGG" id="ath:AT5G38386"/>
<dbReference type="Araport" id="AT5G38386"/>
<dbReference type="TAIR" id="AT5G38386"/>
<dbReference type="HOGENOM" id="CLU_010721_7_1_1"/>
<dbReference type="InParanoid" id="Q3E8L5"/>
<dbReference type="OMA" id="TIVFHER"/>
<dbReference type="PhylomeDB" id="Q3E8L5"/>
<dbReference type="PRO" id="PR:Q3E8L5"/>
<dbReference type="Proteomes" id="UP000006548">
    <property type="component" value="Chromosome 5"/>
</dbReference>
<dbReference type="ExpressionAtlas" id="Q3E8L5">
    <property type="expression patterns" value="baseline"/>
</dbReference>
<dbReference type="CDD" id="cd22160">
    <property type="entry name" value="F-box_AtFBL13-like"/>
    <property type="match status" value="1"/>
</dbReference>
<dbReference type="Gene3D" id="1.20.1280.50">
    <property type="match status" value="1"/>
</dbReference>
<dbReference type="Gene3D" id="3.80.10.10">
    <property type="entry name" value="Ribonuclease Inhibitor"/>
    <property type="match status" value="1"/>
</dbReference>
<dbReference type="InterPro" id="IPR036047">
    <property type="entry name" value="F-box-like_dom_sf"/>
</dbReference>
<dbReference type="InterPro" id="IPR053781">
    <property type="entry name" value="F-box_AtFBL13-like"/>
</dbReference>
<dbReference type="InterPro" id="IPR001810">
    <property type="entry name" value="F-box_dom"/>
</dbReference>
<dbReference type="InterPro" id="IPR006566">
    <property type="entry name" value="FBD"/>
</dbReference>
<dbReference type="InterPro" id="IPR055294">
    <property type="entry name" value="FBL60-like"/>
</dbReference>
<dbReference type="InterPro" id="IPR032675">
    <property type="entry name" value="LRR_dom_sf"/>
</dbReference>
<dbReference type="PANTHER" id="PTHR31293:SF25">
    <property type="entry name" value="F-BOX_RNI SUPERFAMILY PROTEIN"/>
    <property type="match status" value="1"/>
</dbReference>
<dbReference type="PANTHER" id="PTHR31293">
    <property type="entry name" value="RNI-LIKE SUPERFAMILY PROTEIN"/>
    <property type="match status" value="1"/>
</dbReference>
<dbReference type="Pfam" id="PF00646">
    <property type="entry name" value="F-box"/>
    <property type="match status" value="1"/>
</dbReference>
<dbReference type="SMART" id="SM00579">
    <property type="entry name" value="FBD"/>
    <property type="match status" value="1"/>
</dbReference>
<dbReference type="SMART" id="SM00256">
    <property type="entry name" value="FBOX"/>
    <property type="match status" value="1"/>
</dbReference>
<dbReference type="SUPFAM" id="SSF81383">
    <property type="entry name" value="F-box domain"/>
    <property type="match status" value="1"/>
</dbReference>
<dbReference type="SUPFAM" id="SSF52047">
    <property type="entry name" value="RNI-like"/>
    <property type="match status" value="1"/>
</dbReference>
<dbReference type="PROSITE" id="PS50181">
    <property type="entry name" value="FBOX"/>
    <property type="match status" value="1"/>
</dbReference>
<feature type="chain" id="PRO_0000281982" description="Putative F-box/LRR-repeat protein At5g38386">
    <location>
        <begin position="1"/>
        <end position="403"/>
    </location>
</feature>
<feature type="domain" description="F-box" evidence="1">
    <location>
        <begin position="1"/>
        <end position="47"/>
    </location>
</feature>
<feature type="repeat" description="LRR 1">
    <location>
        <begin position="64"/>
        <end position="91"/>
    </location>
</feature>
<feature type="repeat" description="LRR 2">
    <location>
        <begin position="93"/>
        <end position="119"/>
    </location>
</feature>
<feature type="repeat" description="LRR 3">
    <location>
        <begin position="131"/>
        <end position="156"/>
    </location>
</feature>
<feature type="repeat" description="LRR 4">
    <location>
        <begin position="175"/>
        <end position="203"/>
    </location>
</feature>
<feature type="repeat" description="LRR 5">
    <location>
        <begin position="243"/>
        <end position="274"/>
    </location>
</feature>
<feature type="repeat" description="LRR 6">
    <location>
        <begin position="275"/>
        <end position="300"/>
    </location>
</feature>
<reference key="1">
    <citation type="journal article" date="1997" name="DNA Res.">
        <title>Structural analysis of Arabidopsis thaliana chromosome 5. I. Sequence features of the 1.6 Mb regions covered by twenty physically assigned P1 clones.</title>
        <authorList>
            <person name="Sato S."/>
            <person name="Kotani H."/>
            <person name="Nakamura Y."/>
            <person name="Kaneko T."/>
            <person name="Asamizu E."/>
            <person name="Fukami M."/>
            <person name="Miyajima N."/>
            <person name="Tabata S."/>
        </authorList>
    </citation>
    <scope>NUCLEOTIDE SEQUENCE [LARGE SCALE GENOMIC DNA]</scope>
    <source>
        <strain>cv. Columbia</strain>
    </source>
</reference>
<reference key="2">
    <citation type="journal article" date="2017" name="Plant J.">
        <title>Araport11: a complete reannotation of the Arabidopsis thaliana reference genome.</title>
        <authorList>
            <person name="Cheng C.Y."/>
            <person name="Krishnakumar V."/>
            <person name="Chan A.P."/>
            <person name="Thibaud-Nissen F."/>
            <person name="Schobel S."/>
            <person name="Town C.D."/>
        </authorList>
    </citation>
    <scope>GENOME REANNOTATION</scope>
    <source>
        <strain>cv. Columbia</strain>
    </source>
</reference>
<protein>
    <recommendedName>
        <fullName>Putative F-box/LRR-repeat protein At5g38386</fullName>
    </recommendedName>
</protein>